<keyword id="KW-0998">Cell outer membrane</keyword>
<keyword id="KW-0143">Chaperone</keyword>
<keyword id="KW-0449">Lipoprotein</keyword>
<keyword id="KW-0472">Membrane</keyword>
<keyword id="KW-0564">Palmitate</keyword>
<keyword id="KW-0653">Protein transport</keyword>
<keyword id="KW-1185">Reference proteome</keyword>
<keyword id="KW-0732">Signal</keyword>
<keyword id="KW-0813">Transport</keyword>
<gene>
    <name evidence="1" type="primary">lolB</name>
    <name type="ordered locus">CJA_0647</name>
</gene>
<sequence>MYRLLCLLALLTAAGLMGCASQRGLTPPPDLQAHQQQLQAVASWQIDGKLGIRSPQESGSATLKWQQQPDNYQIYLSGPLGQKRLQIIGAPAAVTLLQSGQPPMHAQSAESLIKKAAGWTLPVSQLSYWVRGLPAPKTPITGLQLSPQGLISELQQANWTIHYSNYRDYYHGETRLALPGKIQAEYRDLRLTLVIRDWQLGIH</sequence>
<reference key="1">
    <citation type="journal article" date="2008" name="J. Bacteriol.">
        <title>Insights into plant cell wall degradation from the genome sequence of the soil bacterium Cellvibrio japonicus.</title>
        <authorList>
            <person name="DeBoy R.T."/>
            <person name="Mongodin E.F."/>
            <person name="Fouts D.E."/>
            <person name="Tailford L.E."/>
            <person name="Khouri H."/>
            <person name="Emerson J.B."/>
            <person name="Mohamoud Y."/>
            <person name="Watkins K."/>
            <person name="Henrissat B."/>
            <person name="Gilbert H.J."/>
            <person name="Nelson K.E."/>
        </authorList>
    </citation>
    <scope>NUCLEOTIDE SEQUENCE [LARGE SCALE GENOMIC DNA]</scope>
    <source>
        <strain>Ueda107</strain>
    </source>
</reference>
<protein>
    <recommendedName>
        <fullName evidence="1">Outer-membrane lipoprotein LolB</fullName>
    </recommendedName>
</protein>
<name>LOLB_CELJU</name>
<evidence type="ECO:0000255" key="1">
    <source>
        <dbReference type="HAMAP-Rule" id="MF_00233"/>
    </source>
</evidence>
<accession>B3PJN9</accession>
<comment type="function">
    <text evidence="1">Plays a critical role in the incorporation of lipoproteins in the outer membrane after they are released by the LolA protein.</text>
</comment>
<comment type="subunit">
    <text evidence="1">Monomer.</text>
</comment>
<comment type="subcellular location">
    <subcellularLocation>
        <location evidence="1">Cell outer membrane</location>
        <topology evidence="1">Lipid-anchor</topology>
    </subcellularLocation>
</comment>
<comment type="similarity">
    <text evidence="1">Belongs to the LolB family.</text>
</comment>
<feature type="signal peptide" evidence="1">
    <location>
        <begin position="1"/>
        <end position="18"/>
    </location>
</feature>
<feature type="chain" id="PRO_1000100491" description="Outer-membrane lipoprotein LolB">
    <location>
        <begin position="19"/>
        <end position="203"/>
    </location>
</feature>
<feature type="lipid moiety-binding region" description="N-palmitoyl cysteine" evidence="1">
    <location>
        <position position="19"/>
    </location>
</feature>
<feature type="lipid moiety-binding region" description="S-diacylglycerol cysteine" evidence="1">
    <location>
        <position position="19"/>
    </location>
</feature>
<dbReference type="EMBL" id="CP000934">
    <property type="protein sequence ID" value="ACE85412.1"/>
    <property type="molecule type" value="Genomic_DNA"/>
</dbReference>
<dbReference type="RefSeq" id="WP_012486323.1">
    <property type="nucleotide sequence ID" value="NC_010995.1"/>
</dbReference>
<dbReference type="SMR" id="B3PJN9"/>
<dbReference type="STRING" id="498211.CJA_0647"/>
<dbReference type="KEGG" id="cja:CJA_0647"/>
<dbReference type="eggNOG" id="COG3017">
    <property type="taxonomic scope" value="Bacteria"/>
</dbReference>
<dbReference type="HOGENOM" id="CLU_092816_2_1_6"/>
<dbReference type="OrthoDB" id="9797618at2"/>
<dbReference type="Proteomes" id="UP000001036">
    <property type="component" value="Chromosome"/>
</dbReference>
<dbReference type="GO" id="GO:0009279">
    <property type="term" value="C:cell outer membrane"/>
    <property type="evidence" value="ECO:0007669"/>
    <property type="project" value="UniProtKB-SubCell"/>
</dbReference>
<dbReference type="GO" id="GO:0044874">
    <property type="term" value="P:lipoprotein localization to outer membrane"/>
    <property type="evidence" value="ECO:0007669"/>
    <property type="project" value="UniProtKB-UniRule"/>
</dbReference>
<dbReference type="GO" id="GO:0015031">
    <property type="term" value="P:protein transport"/>
    <property type="evidence" value="ECO:0007669"/>
    <property type="project" value="UniProtKB-KW"/>
</dbReference>
<dbReference type="CDD" id="cd16326">
    <property type="entry name" value="LolB"/>
    <property type="match status" value="1"/>
</dbReference>
<dbReference type="Gene3D" id="2.50.20.10">
    <property type="entry name" value="Lipoprotein localisation LolA/LolB/LppX"/>
    <property type="match status" value="1"/>
</dbReference>
<dbReference type="HAMAP" id="MF_00233">
    <property type="entry name" value="LolB"/>
    <property type="match status" value="1"/>
</dbReference>
<dbReference type="InterPro" id="IPR029046">
    <property type="entry name" value="LolA/LolB/LppX"/>
</dbReference>
<dbReference type="InterPro" id="IPR004565">
    <property type="entry name" value="OM_lipoprot_LolB"/>
</dbReference>
<dbReference type="NCBIfam" id="TIGR00548">
    <property type="entry name" value="lolB"/>
    <property type="match status" value="1"/>
</dbReference>
<dbReference type="Pfam" id="PF03550">
    <property type="entry name" value="LolB"/>
    <property type="match status" value="1"/>
</dbReference>
<dbReference type="SUPFAM" id="SSF89392">
    <property type="entry name" value="Prokaryotic lipoproteins and lipoprotein localization factors"/>
    <property type="match status" value="1"/>
</dbReference>
<dbReference type="PROSITE" id="PS51257">
    <property type="entry name" value="PROKAR_LIPOPROTEIN"/>
    <property type="match status" value="1"/>
</dbReference>
<proteinExistence type="inferred from homology"/>
<organism>
    <name type="scientific">Cellvibrio japonicus (strain Ueda107)</name>
    <name type="common">Pseudomonas fluorescens subsp. cellulosa</name>
    <dbReference type="NCBI Taxonomy" id="498211"/>
    <lineage>
        <taxon>Bacteria</taxon>
        <taxon>Pseudomonadati</taxon>
        <taxon>Pseudomonadota</taxon>
        <taxon>Gammaproteobacteria</taxon>
        <taxon>Cellvibrionales</taxon>
        <taxon>Cellvibrionaceae</taxon>
        <taxon>Cellvibrio</taxon>
    </lineage>
</organism>